<dbReference type="EC" id="3.5.4.19" evidence="1"/>
<dbReference type="EMBL" id="CP000300">
    <property type="protein sequence ID" value="ABE52678.1"/>
    <property type="molecule type" value="Genomic_DNA"/>
</dbReference>
<dbReference type="RefSeq" id="WP_011499821.1">
    <property type="nucleotide sequence ID" value="NC_007955.1"/>
</dbReference>
<dbReference type="SMR" id="Q12V48"/>
<dbReference type="STRING" id="259564.Mbur_1790"/>
<dbReference type="GeneID" id="3997771"/>
<dbReference type="KEGG" id="mbu:Mbur_1790"/>
<dbReference type="HOGENOM" id="CLU_048577_5_0_2"/>
<dbReference type="OrthoDB" id="5853at2157"/>
<dbReference type="UniPathway" id="UPA00031">
    <property type="reaction ID" value="UER00008"/>
</dbReference>
<dbReference type="Proteomes" id="UP000001979">
    <property type="component" value="Chromosome"/>
</dbReference>
<dbReference type="GO" id="GO:0005737">
    <property type="term" value="C:cytoplasm"/>
    <property type="evidence" value="ECO:0007669"/>
    <property type="project" value="UniProtKB-SubCell"/>
</dbReference>
<dbReference type="GO" id="GO:0000287">
    <property type="term" value="F:magnesium ion binding"/>
    <property type="evidence" value="ECO:0007669"/>
    <property type="project" value="UniProtKB-UniRule"/>
</dbReference>
<dbReference type="GO" id="GO:0004635">
    <property type="term" value="F:phosphoribosyl-AMP cyclohydrolase activity"/>
    <property type="evidence" value="ECO:0007669"/>
    <property type="project" value="UniProtKB-UniRule"/>
</dbReference>
<dbReference type="GO" id="GO:0008270">
    <property type="term" value="F:zinc ion binding"/>
    <property type="evidence" value="ECO:0007669"/>
    <property type="project" value="UniProtKB-UniRule"/>
</dbReference>
<dbReference type="GO" id="GO:0000105">
    <property type="term" value="P:L-histidine biosynthetic process"/>
    <property type="evidence" value="ECO:0007669"/>
    <property type="project" value="UniProtKB-UniRule"/>
</dbReference>
<dbReference type="FunFam" id="3.10.20.810:FF:000001">
    <property type="entry name" value="Histidine biosynthesis bifunctional protein HisIE"/>
    <property type="match status" value="1"/>
</dbReference>
<dbReference type="Gene3D" id="4.10.80.70">
    <property type="match status" value="1"/>
</dbReference>
<dbReference type="Gene3D" id="3.10.20.810">
    <property type="entry name" value="Phosphoribosyl-AMP cyclohydrolase"/>
    <property type="match status" value="1"/>
</dbReference>
<dbReference type="HAMAP" id="MF_01021">
    <property type="entry name" value="HisI"/>
    <property type="match status" value="1"/>
</dbReference>
<dbReference type="InterPro" id="IPR026660">
    <property type="entry name" value="PRA-CH"/>
</dbReference>
<dbReference type="InterPro" id="IPR002496">
    <property type="entry name" value="PRib_AMP_CycHydrolase_dom"/>
</dbReference>
<dbReference type="InterPro" id="IPR038019">
    <property type="entry name" value="PRib_AMP_CycHydrolase_sf"/>
</dbReference>
<dbReference type="NCBIfam" id="NF000768">
    <property type="entry name" value="PRK00051.1"/>
    <property type="match status" value="1"/>
</dbReference>
<dbReference type="PANTHER" id="PTHR42945">
    <property type="entry name" value="HISTIDINE BIOSYNTHESIS BIFUNCTIONAL PROTEIN"/>
    <property type="match status" value="1"/>
</dbReference>
<dbReference type="PANTHER" id="PTHR42945:SF1">
    <property type="entry name" value="HISTIDINE BIOSYNTHESIS BIFUNCTIONAL PROTEIN HIS7"/>
    <property type="match status" value="1"/>
</dbReference>
<dbReference type="Pfam" id="PF01502">
    <property type="entry name" value="PRA-CH"/>
    <property type="match status" value="1"/>
</dbReference>
<dbReference type="SUPFAM" id="SSF141734">
    <property type="entry name" value="HisI-like"/>
    <property type="match status" value="1"/>
</dbReference>
<evidence type="ECO:0000255" key="1">
    <source>
        <dbReference type="HAMAP-Rule" id="MF_01021"/>
    </source>
</evidence>
<proteinExistence type="inferred from homology"/>
<feature type="chain" id="PRO_0000319727" description="Phosphoribosyl-AMP cyclohydrolase">
    <location>
        <begin position="1"/>
        <end position="121"/>
    </location>
</feature>
<feature type="binding site" evidence="1">
    <location>
        <position position="76"/>
    </location>
    <ligand>
        <name>Mg(2+)</name>
        <dbReference type="ChEBI" id="CHEBI:18420"/>
    </ligand>
</feature>
<feature type="binding site" evidence="1">
    <location>
        <position position="77"/>
    </location>
    <ligand>
        <name>Zn(2+)</name>
        <dbReference type="ChEBI" id="CHEBI:29105"/>
        <note>ligand shared between dimeric partners</note>
    </ligand>
</feature>
<feature type="binding site" evidence="1">
    <location>
        <position position="78"/>
    </location>
    <ligand>
        <name>Mg(2+)</name>
        <dbReference type="ChEBI" id="CHEBI:18420"/>
    </ligand>
</feature>
<feature type="binding site" evidence="1">
    <location>
        <position position="80"/>
    </location>
    <ligand>
        <name>Mg(2+)</name>
        <dbReference type="ChEBI" id="CHEBI:18420"/>
    </ligand>
</feature>
<feature type="binding site" evidence="1">
    <location>
        <position position="93"/>
    </location>
    <ligand>
        <name>Zn(2+)</name>
        <dbReference type="ChEBI" id="CHEBI:29105"/>
        <note>ligand shared between dimeric partners</note>
    </ligand>
</feature>
<feature type="binding site" evidence="1">
    <location>
        <position position="100"/>
    </location>
    <ligand>
        <name>Zn(2+)</name>
        <dbReference type="ChEBI" id="CHEBI:29105"/>
        <note>ligand shared between dimeric partners</note>
    </ligand>
</feature>
<reference key="1">
    <citation type="journal article" date="2009" name="ISME J.">
        <title>The genome sequence of the psychrophilic archaeon, Methanococcoides burtonii: the role of genome evolution in cold adaptation.</title>
        <authorList>
            <person name="Allen M.A."/>
            <person name="Lauro F.M."/>
            <person name="Williams T.J."/>
            <person name="Burg D."/>
            <person name="Siddiqui K.S."/>
            <person name="De Francisci D."/>
            <person name="Chong K.W."/>
            <person name="Pilak O."/>
            <person name="Chew H.H."/>
            <person name="De Maere M.Z."/>
            <person name="Ting L."/>
            <person name="Katrib M."/>
            <person name="Ng C."/>
            <person name="Sowers K.R."/>
            <person name="Galperin M.Y."/>
            <person name="Anderson I.J."/>
            <person name="Ivanova N."/>
            <person name="Dalin E."/>
            <person name="Martinez M."/>
            <person name="Lapidus A."/>
            <person name="Hauser L."/>
            <person name="Land M."/>
            <person name="Thomas T."/>
            <person name="Cavicchioli R."/>
        </authorList>
    </citation>
    <scope>NUCLEOTIDE SEQUENCE [LARGE SCALE GENOMIC DNA]</scope>
    <source>
        <strain>DSM 6242 / NBRC 107633 / OCM 468 / ACE-M</strain>
    </source>
</reference>
<organism>
    <name type="scientific">Methanococcoides burtonii (strain DSM 6242 / NBRC 107633 / OCM 468 / ACE-M)</name>
    <dbReference type="NCBI Taxonomy" id="259564"/>
    <lineage>
        <taxon>Archaea</taxon>
        <taxon>Methanobacteriati</taxon>
        <taxon>Methanobacteriota</taxon>
        <taxon>Stenosarchaea group</taxon>
        <taxon>Methanomicrobia</taxon>
        <taxon>Methanosarcinales</taxon>
        <taxon>Methanosarcinaceae</taxon>
        <taxon>Methanococcoides</taxon>
    </lineage>
</organism>
<accession>Q12V48</accession>
<comment type="function">
    <text evidence="1">Catalyzes the hydrolysis of the adenine ring of phosphoribosyl-AMP.</text>
</comment>
<comment type="catalytic activity">
    <reaction evidence="1">
        <text>1-(5-phospho-beta-D-ribosyl)-5'-AMP + H2O = 1-(5-phospho-beta-D-ribosyl)-5-[(5-phospho-beta-D-ribosylamino)methylideneamino]imidazole-4-carboxamide</text>
        <dbReference type="Rhea" id="RHEA:20049"/>
        <dbReference type="ChEBI" id="CHEBI:15377"/>
        <dbReference type="ChEBI" id="CHEBI:58435"/>
        <dbReference type="ChEBI" id="CHEBI:59457"/>
        <dbReference type="EC" id="3.5.4.19"/>
    </reaction>
</comment>
<comment type="cofactor">
    <cofactor evidence="1">
        <name>Mg(2+)</name>
        <dbReference type="ChEBI" id="CHEBI:18420"/>
    </cofactor>
    <text evidence="1">Binds 1 Mg(2+) ion per subunit.</text>
</comment>
<comment type="cofactor">
    <cofactor evidence="1">
        <name>Zn(2+)</name>
        <dbReference type="ChEBI" id="CHEBI:29105"/>
    </cofactor>
    <text evidence="1">Binds 1 zinc ion per subunit.</text>
</comment>
<comment type="pathway">
    <text evidence="1">Amino-acid biosynthesis; L-histidine biosynthesis; L-histidine from 5-phospho-alpha-D-ribose 1-diphosphate: step 3/9.</text>
</comment>
<comment type="subunit">
    <text evidence="1">Homodimer.</text>
</comment>
<comment type="subcellular location">
    <subcellularLocation>
        <location evidence="1">Cytoplasm</location>
    </subcellularLocation>
</comment>
<comment type="similarity">
    <text evidence="1">Belongs to the PRA-CH family.</text>
</comment>
<gene>
    <name evidence="1" type="primary">hisI</name>
    <name type="ordered locus">Mbur_1790</name>
</gene>
<keyword id="KW-0028">Amino-acid biosynthesis</keyword>
<keyword id="KW-0963">Cytoplasm</keyword>
<keyword id="KW-0368">Histidine biosynthesis</keyword>
<keyword id="KW-0378">Hydrolase</keyword>
<keyword id="KW-0460">Magnesium</keyword>
<keyword id="KW-0479">Metal-binding</keyword>
<keyword id="KW-0862">Zinc</keyword>
<protein>
    <recommendedName>
        <fullName evidence="1">Phosphoribosyl-AMP cyclohydrolase</fullName>
        <shortName evidence="1">PRA-CH</shortName>
        <ecNumber evidence="1">3.5.4.19</ecNumber>
    </recommendedName>
</protein>
<sequence length="121" mass="13661">MIDLDTLKFDGNGLIGAIAQDNRTGEVLMFAFMNREALEKTIETGIAHYWSRSRQKLWKKGESSGHMQKVHELLIDCDMDAIILKISQEGGACHTGYRSCFYRNIEGDVVGEKVFDPADVY</sequence>
<name>HIS3_METBU</name>